<name>PHNX_SALG2</name>
<sequence length="270" mass="28783">MMNRIHAVILDWAGTTVDFGSFAPTQIFVEAFRQAFDVEITLAEARVPMGLGKWQHIEALGKLPAVDARWQAKFGRSMSAADIDAIYAAFMPLQIAKVVDFSSPIAGVIDTIAALRAEGIKIGSCSGYPRAVMERLVPAAAEHGYRPDHWVATDDLAAGGRPGPWMALQNVIALGIDAVAHCVKVDDAALGISEGLNAGMWTVGLAVSGNEFGATWDAYQTMSKEDVAVRREHAASKLYAAGAHYVVDSLADLSGVIAHINARLAQGERP</sequence>
<evidence type="ECO:0000255" key="1">
    <source>
        <dbReference type="HAMAP-Rule" id="MF_01375"/>
    </source>
</evidence>
<dbReference type="EC" id="3.11.1.1" evidence="1"/>
<dbReference type="EMBL" id="AM933173">
    <property type="protein sequence ID" value="CAR36342.1"/>
    <property type="molecule type" value="Genomic_DNA"/>
</dbReference>
<dbReference type="SMR" id="B5R6T3"/>
<dbReference type="KEGG" id="seg:SG0443"/>
<dbReference type="HOGENOM" id="CLU_045011_12_0_6"/>
<dbReference type="Proteomes" id="UP000008321">
    <property type="component" value="Chromosome"/>
</dbReference>
<dbReference type="GO" id="GO:0005829">
    <property type="term" value="C:cytosol"/>
    <property type="evidence" value="ECO:0007669"/>
    <property type="project" value="TreeGrafter"/>
</dbReference>
<dbReference type="GO" id="GO:0000287">
    <property type="term" value="F:magnesium ion binding"/>
    <property type="evidence" value="ECO:0007669"/>
    <property type="project" value="UniProtKB-UniRule"/>
</dbReference>
<dbReference type="GO" id="GO:0008967">
    <property type="term" value="F:phosphoglycolate phosphatase activity"/>
    <property type="evidence" value="ECO:0007669"/>
    <property type="project" value="TreeGrafter"/>
</dbReference>
<dbReference type="GO" id="GO:0050194">
    <property type="term" value="F:phosphonoacetaldehyde hydrolase activity"/>
    <property type="evidence" value="ECO:0007669"/>
    <property type="project" value="UniProtKB-UniRule"/>
</dbReference>
<dbReference type="GO" id="GO:0006281">
    <property type="term" value="P:DNA repair"/>
    <property type="evidence" value="ECO:0007669"/>
    <property type="project" value="TreeGrafter"/>
</dbReference>
<dbReference type="GO" id="GO:0019700">
    <property type="term" value="P:organic phosphonate catabolic process"/>
    <property type="evidence" value="ECO:0007669"/>
    <property type="project" value="InterPro"/>
</dbReference>
<dbReference type="CDD" id="cd02586">
    <property type="entry name" value="HAD_PHN"/>
    <property type="match status" value="1"/>
</dbReference>
<dbReference type="FunFam" id="1.10.150.240:FF:000006">
    <property type="entry name" value="Phosphonoacetaldehyde hydrolase"/>
    <property type="match status" value="1"/>
</dbReference>
<dbReference type="FunFam" id="3.40.50.1000:FF:000072">
    <property type="entry name" value="Phosphonoacetaldehyde hydrolase"/>
    <property type="match status" value="1"/>
</dbReference>
<dbReference type="Gene3D" id="3.40.50.1000">
    <property type="entry name" value="HAD superfamily/HAD-like"/>
    <property type="match status" value="1"/>
</dbReference>
<dbReference type="Gene3D" id="1.10.150.240">
    <property type="entry name" value="Putative phosphatase, domain 2"/>
    <property type="match status" value="1"/>
</dbReference>
<dbReference type="HAMAP" id="MF_01375">
    <property type="entry name" value="PhnX"/>
    <property type="match status" value="1"/>
</dbReference>
<dbReference type="InterPro" id="IPR050155">
    <property type="entry name" value="HAD-like_hydrolase_sf"/>
</dbReference>
<dbReference type="InterPro" id="IPR036412">
    <property type="entry name" value="HAD-like_sf"/>
</dbReference>
<dbReference type="InterPro" id="IPR006439">
    <property type="entry name" value="HAD-SF_hydro_IA"/>
</dbReference>
<dbReference type="InterPro" id="IPR023214">
    <property type="entry name" value="HAD_sf"/>
</dbReference>
<dbReference type="InterPro" id="IPR023198">
    <property type="entry name" value="PGP-like_dom2"/>
</dbReference>
<dbReference type="InterPro" id="IPR006323">
    <property type="entry name" value="Phosphonoacetald_hydro"/>
</dbReference>
<dbReference type="NCBIfam" id="TIGR01509">
    <property type="entry name" value="HAD-SF-IA-v3"/>
    <property type="match status" value="1"/>
</dbReference>
<dbReference type="NCBIfam" id="TIGR01422">
    <property type="entry name" value="phosphonatase"/>
    <property type="match status" value="1"/>
</dbReference>
<dbReference type="PANTHER" id="PTHR43434">
    <property type="entry name" value="PHOSPHOGLYCOLATE PHOSPHATASE"/>
    <property type="match status" value="1"/>
</dbReference>
<dbReference type="PANTHER" id="PTHR43434:SF19">
    <property type="entry name" value="PHOSPHONOACETALDEHYDE HYDROLASE"/>
    <property type="match status" value="1"/>
</dbReference>
<dbReference type="Pfam" id="PF00702">
    <property type="entry name" value="Hydrolase"/>
    <property type="match status" value="1"/>
</dbReference>
<dbReference type="SFLD" id="SFLDG01129">
    <property type="entry name" value="C1.5:_HAD__Beta-PGM__Phosphata"/>
    <property type="match status" value="1"/>
</dbReference>
<dbReference type="SFLD" id="SFLDF00038">
    <property type="entry name" value="phosphonoacetaldehyde_hydrolas"/>
    <property type="match status" value="1"/>
</dbReference>
<dbReference type="SUPFAM" id="SSF56784">
    <property type="entry name" value="HAD-like"/>
    <property type="match status" value="1"/>
</dbReference>
<protein>
    <recommendedName>
        <fullName evidence="1">Phosphonoacetaldehyde hydrolase</fullName>
        <shortName evidence="1">Phosphonatase</shortName>
        <ecNumber evidence="1">3.11.1.1</ecNumber>
    </recommendedName>
    <alternativeName>
        <fullName evidence="1">Phosphonoacetaldehyde phosphonohydrolase</fullName>
    </alternativeName>
</protein>
<proteinExistence type="inferred from homology"/>
<feature type="chain" id="PRO_1000144839" description="Phosphonoacetaldehyde hydrolase">
    <location>
        <begin position="1"/>
        <end position="270"/>
    </location>
</feature>
<feature type="active site" description="Nucleophile" evidence="1">
    <location>
        <position position="11"/>
    </location>
</feature>
<feature type="active site" description="Schiff-base intermediate with substrate" evidence="1">
    <location>
        <position position="53"/>
    </location>
</feature>
<feature type="binding site" evidence="1">
    <location>
        <position position="11"/>
    </location>
    <ligand>
        <name>Mg(2+)</name>
        <dbReference type="ChEBI" id="CHEBI:18420"/>
    </ligand>
</feature>
<feature type="binding site" evidence="1">
    <location>
        <position position="13"/>
    </location>
    <ligand>
        <name>Mg(2+)</name>
        <dbReference type="ChEBI" id="CHEBI:18420"/>
    </ligand>
</feature>
<feature type="binding site" evidence="1">
    <location>
        <position position="187"/>
    </location>
    <ligand>
        <name>Mg(2+)</name>
        <dbReference type="ChEBI" id="CHEBI:18420"/>
    </ligand>
</feature>
<organism>
    <name type="scientific">Salmonella gallinarum (strain 287/91 / NCTC 13346)</name>
    <dbReference type="NCBI Taxonomy" id="550538"/>
    <lineage>
        <taxon>Bacteria</taxon>
        <taxon>Pseudomonadati</taxon>
        <taxon>Pseudomonadota</taxon>
        <taxon>Gammaproteobacteria</taxon>
        <taxon>Enterobacterales</taxon>
        <taxon>Enterobacteriaceae</taxon>
        <taxon>Salmonella</taxon>
    </lineage>
</organism>
<keyword id="KW-0378">Hydrolase</keyword>
<keyword id="KW-0460">Magnesium</keyword>
<keyword id="KW-0479">Metal-binding</keyword>
<keyword id="KW-0704">Schiff base</keyword>
<reference key="1">
    <citation type="journal article" date="2008" name="Genome Res.">
        <title>Comparative genome analysis of Salmonella enteritidis PT4 and Salmonella gallinarum 287/91 provides insights into evolutionary and host adaptation pathways.</title>
        <authorList>
            <person name="Thomson N.R."/>
            <person name="Clayton D.J."/>
            <person name="Windhorst D."/>
            <person name="Vernikos G."/>
            <person name="Davidson S."/>
            <person name="Churcher C."/>
            <person name="Quail M.A."/>
            <person name="Stevens M."/>
            <person name="Jones M.A."/>
            <person name="Watson M."/>
            <person name="Barron A."/>
            <person name="Layton A."/>
            <person name="Pickard D."/>
            <person name="Kingsley R.A."/>
            <person name="Bignell A."/>
            <person name="Clark L."/>
            <person name="Harris B."/>
            <person name="Ormond D."/>
            <person name="Abdellah Z."/>
            <person name="Brooks K."/>
            <person name="Cherevach I."/>
            <person name="Chillingworth T."/>
            <person name="Woodward J."/>
            <person name="Norberczak H."/>
            <person name="Lord A."/>
            <person name="Arrowsmith C."/>
            <person name="Jagels K."/>
            <person name="Moule S."/>
            <person name="Mungall K."/>
            <person name="Saunders M."/>
            <person name="Whitehead S."/>
            <person name="Chabalgoity J.A."/>
            <person name="Maskell D."/>
            <person name="Humphreys T."/>
            <person name="Roberts M."/>
            <person name="Barrow P.A."/>
            <person name="Dougan G."/>
            <person name="Parkhill J."/>
        </authorList>
    </citation>
    <scope>NUCLEOTIDE SEQUENCE [LARGE SCALE GENOMIC DNA]</scope>
    <source>
        <strain>287/91 / NCTC 13346</strain>
    </source>
</reference>
<accession>B5R6T3</accession>
<comment type="function">
    <text evidence="1">Involved in phosphonate degradation.</text>
</comment>
<comment type="catalytic activity">
    <reaction evidence="1">
        <text>phosphonoacetaldehyde + H2O = acetaldehyde + phosphate + H(+)</text>
        <dbReference type="Rhea" id="RHEA:18905"/>
        <dbReference type="ChEBI" id="CHEBI:15343"/>
        <dbReference type="ChEBI" id="CHEBI:15377"/>
        <dbReference type="ChEBI" id="CHEBI:15378"/>
        <dbReference type="ChEBI" id="CHEBI:43474"/>
        <dbReference type="ChEBI" id="CHEBI:58383"/>
        <dbReference type="EC" id="3.11.1.1"/>
    </reaction>
</comment>
<comment type="cofactor">
    <cofactor evidence="1">
        <name>Mg(2+)</name>
        <dbReference type="ChEBI" id="CHEBI:18420"/>
    </cofactor>
    <text evidence="1">Binds 1 Mg(2+) ion per subunit.</text>
</comment>
<comment type="subunit">
    <text evidence="1">Homodimer.</text>
</comment>
<comment type="similarity">
    <text evidence="1">Belongs to the HAD-like hydrolase superfamily. PhnX family.</text>
</comment>
<gene>
    <name evidence="1" type="primary">phnX</name>
    <name type="ordered locus">SG0443</name>
</gene>